<gene>
    <name type="ordered locus">MYCGA3080</name>
    <name type="ORF">MGA_1180</name>
</gene>
<dbReference type="EMBL" id="AE015450">
    <property type="protein sequence ID" value="AAP56658.2"/>
    <property type="molecule type" value="Genomic_DNA"/>
</dbReference>
<dbReference type="EMBL" id="X64256">
    <property type="protein sequence ID" value="CAA45553.1"/>
    <property type="molecule type" value="Genomic_DNA"/>
</dbReference>
<dbReference type="PIR" id="S24341">
    <property type="entry name" value="S24341"/>
</dbReference>
<dbReference type="RefSeq" id="WP_011113549.1">
    <property type="nucleotide sequence ID" value="NC_004829.2"/>
</dbReference>
<dbReference type="SMR" id="P33275"/>
<dbReference type="KEGG" id="mga:MGA_1180"/>
<dbReference type="PATRIC" id="fig|233150.7.peg.342"/>
<dbReference type="HOGENOM" id="CLU_876997_0_0_14"/>
<dbReference type="OrthoDB" id="403974at2"/>
<dbReference type="Proteomes" id="UP000001418">
    <property type="component" value="Chromosome"/>
</dbReference>
<dbReference type="Gene3D" id="3.40.630.30">
    <property type="match status" value="1"/>
</dbReference>
<dbReference type="InterPro" id="IPR016181">
    <property type="entry name" value="Acyl_CoA_acyltransferase"/>
</dbReference>
<dbReference type="InterPro" id="IPR024320">
    <property type="entry name" value="LPG_synthase_C"/>
</dbReference>
<dbReference type="InterPro" id="IPR016732">
    <property type="entry name" value="UCP018688"/>
</dbReference>
<dbReference type="PANTHER" id="PTHR41373">
    <property type="entry name" value="DUF2156 DOMAIN-CONTAINING PROTEIN"/>
    <property type="match status" value="1"/>
</dbReference>
<dbReference type="PANTHER" id="PTHR41373:SF1">
    <property type="entry name" value="PHOSPHATIDYLGLYCEROL LYSYLTRANSFERASE C-TERMINAL DOMAIN-CONTAINING PROTEIN"/>
    <property type="match status" value="1"/>
</dbReference>
<dbReference type="Pfam" id="PF09924">
    <property type="entry name" value="LPG_synthase_C"/>
    <property type="match status" value="1"/>
</dbReference>
<dbReference type="SUPFAM" id="SSF55729">
    <property type="entry name" value="Acyl-CoA N-acyltransferases (Nat)"/>
    <property type="match status" value="1"/>
</dbReference>
<keyword id="KW-1185">Reference proteome</keyword>
<sequence length="308" mass="36177">MDRLDLTNASKLQERINQIDSSHFYSALTYYSWSFYGLNISYQFHEKGISFFGEINLEKNLLHEVLQDKYCPTQKVIFAPITKPNQPDDFLDLIKGQIEQLDNLQAIYIDDLTGIELEWVKSKYDVEIIHESSTNFLYETKKIMTLSGKSLQKKRNHLNFFIKQYEKDAKIKINREVDLNQLEKFYLTWINDCEDPSAYQSELALFRAIKPLIQDGSLKLTALYYLDQIIGFCVSYSLNNRCEIFIEHCDETYRGSYQYLLSNSLRIHHSNDALTDRQDDMGSASISYSKLSYKPEFIIKRYLVKVIC</sequence>
<protein>
    <recommendedName>
        <fullName>Uncharacterized protein MYCGA3080</fullName>
    </recommendedName>
</protein>
<accession>P33275</accession>
<proteinExistence type="predicted"/>
<name>Y308_MYCGA</name>
<organism>
    <name type="scientific">Mycoplasmoides gallisepticum (strain R(low / passage 15 / clone 2))</name>
    <name type="common">Mycoplasma gallisepticum</name>
    <dbReference type="NCBI Taxonomy" id="710127"/>
    <lineage>
        <taxon>Bacteria</taxon>
        <taxon>Bacillati</taxon>
        <taxon>Mycoplasmatota</taxon>
        <taxon>Mycoplasmoidales</taxon>
        <taxon>Mycoplasmoidaceae</taxon>
        <taxon>Mycoplasmoides</taxon>
    </lineage>
</organism>
<feature type="chain" id="PRO_0000210728" description="Uncharacterized protein MYCGA3080">
    <location>
        <begin position="1"/>
        <end position="308"/>
    </location>
</feature>
<reference key="1">
    <citation type="journal article" date="2003" name="Microbiology">
        <title>The complete genome sequence of the avian pathogen Mycoplasma gallisepticum strain R(low).</title>
        <authorList>
            <person name="Papazisi L."/>
            <person name="Gorton T.S."/>
            <person name="Kutish G."/>
            <person name="Markham P.F."/>
            <person name="Browning G.F."/>
            <person name="Nguyen D.K."/>
            <person name="Swartzell S."/>
            <person name="Madan A."/>
            <person name="Mahairas G."/>
            <person name="Geary S.J."/>
        </authorList>
    </citation>
    <scope>NUCLEOTIDE SEQUENCE [LARGE SCALE GENOMIC DNA]</scope>
    <source>
        <strain>R(low / passage 15 / clone 2)</strain>
    </source>
</reference>
<reference key="2">
    <citation type="journal article" date="1992" name="Biochem. J.">
        <title>Nucleotide sequence, organization and characterization of the atp genes and the encoded subunits of Mycoplasma gallisepticum ATPase.</title>
        <authorList>
            <person name="Rasmussen O.F."/>
            <person name="Shirvan M.H."/>
            <person name="Margalit H."/>
            <person name="Christiansen C."/>
            <person name="Rottem S."/>
        </authorList>
    </citation>
    <scope>NUCLEOTIDE SEQUENCE [GENOMIC DNA] OF 1-89</scope>
    <source>
        <strain>A5969Var.B</strain>
    </source>
</reference>